<feature type="chain" id="PRO_0000351889" description="Protein-L-isoaspartate O-methyltransferase 1">
    <location>
        <begin position="1"/>
        <end position="236"/>
    </location>
</feature>
<feature type="active site" evidence="1">
    <location>
        <position position="86"/>
    </location>
</feature>
<dbReference type="EC" id="2.1.1.77" evidence="1"/>
<dbReference type="EMBL" id="CP000103">
    <property type="protein sequence ID" value="ABB73460.1"/>
    <property type="molecule type" value="Genomic_DNA"/>
</dbReference>
<dbReference type="RefSeq" id="WP_011379515.1">
    <property type="nucleotide sequence ID" value="NC_007614.1"/>
</dbReference>
<dbReference type="SMR" id="Q2YCR1"/>
<dbReference type="STRING" id="323848.Nmul_A0151"/>
<dbReference type="KEGG" id="nmu:Nmul_A0151"/>
<dbReference type="eggNOG" id="COG2518">
    <property type="taxonomic scope" value="Bacteria"/>
</dbReference>
<dbReference type="HOGENOM" id="CLU_055432_2_0_4"/>
<dbReference type="OrthoDB" id="9810066at2"/>
<dbReference type="Proteomes" id="UP000002718">
    <property type="component" value="Chromosome"/>
</dbReference>
<dbReference type="GO" id="GO:0005737">
    <property type="term" value="C:cytoplasm"/>
    <property type="evidence" value="ECO:0007669"/>
    <property type="project" value="UniProtKB-SubCell"/>
</dbReference>
<dbReference type="GO" id="GO:0004719">
    <property type="term" value="F:protein-L-isoaspartate (D-aspartate) O-methyltransferase activity"/>
    <property type="evidence" value="ECO:0007669"/>
    <property type="project" value="UniProtKB-UniRule"/>
</dbReference>
<dbReference type="GO" id="GO:0032259">
    <property type="term" value="P:methylation"/>
    <property type="evidence" value="ECO:0007669"/>
    <property type="project" value="UniProtKB-KW"/>
</dbReference>
<dbReference type="GO" id="GO:0036211">
    <property type="term" value="P:protein modification process"/>
    <property type="evidence" value="ECO:0007669"/>
    <property type="project" value="UniProtKB-UniRule"/>
</dbReference>
<dbReference type="GO" id="GO:0030091">
    <property type="term" value="P:protein repair"/>
    <property type="evidence" value="ECO:0007669"/>
    <property type="project" value="UniProtKB-UniRule"/>
</dbReference>
<dbReference type="CDD" id="cd02440">
    <property type="entry name" value="AdoMet_MTases"/>
    <property type="match status" value="1"/>
</dbReference>
<dbReference type="FunFam" id="3.40.50.150:FF:000010">
    <property type="entry name" value="Protein-L-isoaspartate O-methyltransferase"/>
    <property type="match status" value="1"/>
</dbReference>
<dbReference type="Gene3D" id="3.40.50.150">
    <property type="entry name" value="Vaccinia Virus protein VP39"/>
    <property type="match status" value="1"/>
</dbReference>
<dbReference type="HAMAP" id="MF_00090">
    <property type="entry name" value="PIMT"/>
    <property type="match status" value="1"/>
</dbReference>
<dbReference type="InterPro" id="IPR000682">
    <property type="entry name" value="PCMT"/>
</dbReference>
<dbReference type="InterPro" id="IPR029063">
    <property type="entry name" value="SAM-dependent_MTases_sf"/>
</dbReference>
<dbReference type="NCBIfam" id="TIGR00080">
    <property type="entry name" value="pimt"/>
    <property type="match status" value="1"/>
</dbReference>
<dbReference type="NCBIfam" id="NF001453">
    <property type="entry name" value="PRK00312.1"/>
    <property type="match status" value="1"/>
</dbReference>
<dbReference type="PANTHER" id="PTHR11579">
    <property type="entry name" value="PROTEIN-L-ISOASPARTATE O-METHYLTRANSFERASE"/>
    <property type="match status" value="1"/>
</dbReference>
<dbReference type="PANTHER" id="PTHR11579:SF0">
    <property type="entry name" value="PROTEIN-L-ISOASPARTATE(D-ASPARTATE) O-METHYLTRANSFERASE"/>
    <property type="match status" value="1"/>
</dbReference>
<dbReference type="Pfam" id="PF01135">
    <property type="entry name" value="PCMT"/>
    <property type="match status" value="1"/>
</dbReference>
<dbReference type="SUPFAM" id="SSF53335">
    <property type="entry name" value="S-adenosyl-L-methionine-dependent methyltransferases"/>
    <property type="match status" value="1"/>
</dbReference>
<dbReference type="PROSITE" id="PS01279">
    <property type="entry name" value="PCMT"/>
    <property type="match status" value="1"/>
</dbReference>
<keyword id="KW-0963">Cytoplasm</keyword>
<keyword id="KW-0489">Methyltransferase</keyword>
<keyword id="KW-1185">Reference proteome</keyword>
<keyword id="KW-0949">S-adenosyl-L-methionine</keyword>
<keyword id="KW-0808">Transferase</keyword>
<organism>
    <name type="scientific">Nitrosospira multiformis (strain ATCC 25196 / NCIMB 11849 / C 71)</name>
    <dbReference type="NCBI Taxonomy" id="323848"/>
    <lineage>
        <taxon>Bacteria</taxon>
        <taxon>Pseudomonadati</taxon>
        <taxon>Pseudomonadota</taxon>
        <taxon>Betaproteobacteria</taxon>
        <taxon>Nitrosomonadales</taxon>
        <taxon>Nitrosomonadaceae</taxon>
        <taxon>Nitrosospira</taxon>
    </lineage>
</organism>
<sequence>MNWQFATAFGALMYFGCVIPLSAAEYEALRQKMVREVIAASGNSPPGASVVAAMEKVERHRFVPAWLSIFAYRNHPLPIGHGQTISQPLIVARMTELLKLKKDDKVLEIGTGSGYQAAVLAEIAKTVYTIEIIEPLGNEAAGRLQSLGYDNVKTRIGDGYYGWPEAAPFDAILVTAAASHVPPPLLKQLKPGGRMVVPLGAPFMTQYLMLVEKQPDGSVTTHQIVPVRFVPLRGGH</sequence>
<reference key="1">
    <citation type="submission" date="2005-08" db="EMBL/GenBank/DDBJ databases">
        <title>Complete sequence of chromosome 1 of Nitrosospira multiformis ATCC 25196.</title>
        <authorList>
            <person name="Copeland A."/>
            <person name="Lucas S."/>
            <person name="Lapidus A."/>
            <person name="Barry K."/>
            <person name="Detter J.C."/>
            <person name="Glavina T."/>
            <person name="Hammon N."/>
            <person name="Israni S."/>
            <person name="Pitluck S."/>
            <person name="Chain P."/>
            <person name="Malfatti S."/>
            <person name="Shin M."/>
            <person name="Vergez L."/>
            <person name="Schmutz J."/>
            <person name="Larimer F."/>
            <person name="Land M."/>
            <person name="Hauser L."/>
            <person name="Kyrpides N."/>
            <person name="Lykidis A."/>
            <person name="Richardson P."/>
        </authorList>
    </citation>
    <scope>NUCLEOTIDE SEQUENCE [LARGE SCALE GENOMIC DNA]</scope>
    <source>
        <strain>ATCC 25196 / NCIMB 11849 / C 71</strain>
    </source>
</reference>
<comment type="function">
    <text evidence="1">Catalyzes the methyl esterification of L-isoaspartyl residues in peptides and proteins that result from spontaneous decomposition of normal L-aspartyl and L-asparaginyl residues. It plays a role in the repair and/or degradation of damaged proteins.</text>
</comment>
<comment type="catalytic activity">
    <reaction evidence="1">
        <text>[protein]-L-isoaspartate + S-adenosyl-L-methionine = [protein]-L-isoaspartate alpha-methyl ester + S-adenosyl-L-homocysteine</text>
        <dbReference type="Rhea" id="RHEA:12705"/>
        <dbReference type="Rhea" id="RHEA-COMP:12143"/>
        <dbReference type="Rhea" id="RHEA-COMP:12144"/>
        <dbReference type="ChEBI" id="CHEBI:57856"/>
        <dbReference type="ChEBI" id="CHEBI:59789"/>
        <dbReference type="ChEBI" id="CHEBI:90596"/>
        <dbReference type="ChEBI" id="CHEBI:90598"/>
        <dbReference type="EC" id="2.1.1.77"/>
    </reaction>
</comment>
<comment type="subcellular location">
    <subcellularLocation>
        <location evidence="1">Cytoplasm</location>
    </subcellularLocation>
</comment>
<comment type="similarity">
    <text evidence="1">Belongs to the methyltransferase superfamily. L-isoaspartyl/D-aspartyl protein methyltransferase family.</text>
</comment>
<protein>
    <recommendedName>
        <fullName evidence="1">Protein-L-isoaspartate O-methyltransferase 1</fullName>
        <ecNumber evidence="1">2.1.1.77</ecNumber>
    </recommendedName>
    <alternativeName>
        <fullName evidence="1">L-isoaspartyl protein carboxyl methyltransferase 1</fullName>
    </alternativeName>
    <alternativeName>
        <fullName evidence="1">Protein L-isoaspartyl methyltransferase 1</fullName>
    </alternativeName>
    <alternativeName>
        <fullName evidence="1">Protein-beta-aspartate methyltransferase 1</fullName>
        <shortName evidence="1">PIMT 1</shortName>
    </alternativeName>
</protein>
<proteinExistence type="inferred from homology"/>
<gene>
    <name evidence="1" type="primary">pcm1</name>
    <name type="ordered locus">Nmul_A0151</name>
</gene>
<accession>Q2YCR1</accession>
<name>PIMT1_NITMU</name>
<evidence type="ECO:0000255" key="1">
    <source>
        <dbReference type="HAMAP-Rule" id="MF_00090"/>
    </source>
</evidence>